<evidence type="ECO:0000250" key="1">
    <source>
        <dbReference type="UniProtKB" id="P43427"/>
    </source>
</evidence>
<evidence type="ECO:0000250" key="2">
    <source>
        <dbReference type="UniProtKB" id="Q9WV38"/>
    </source>
</evidence>
<evidence type="ECO:0000255" key="3"/>
<evidence type="ECO:0000269" key="4">
    <source>
    </source>
</evidence>
<evidence type="ECO:0000269" key="5">
    <source>
    </source>
</evidence>
<evidence type="ECO:0000269" key="6">
    <source>
    </source>
</evidence>
<evidence type="ECO:0000269" key="7">
    <source>
    </source>
</evidence>
<evidence type="ECO:0000269" key="8">
    <source>
    </source>
</evidence>
<evidence type="ECO:0000269" key="9">
    <source>
    </source>
</evidence>
<evidence type="ECO:0000269" key="10">
    <source>
    </source>
</evidence>
<evidence type="ECO:0000269" key="11">
    <source>
    </source>
</evidence>
<evidence type="ECO:0000269" key="12">
    <source>
    </source>
</evidence>
<evidence type="ECO:0000303" key="13">
    <source>
    </source>
</evidence>
<evidence type="ECO:0000303" key="14">
    <source>
    </source>
</evidence>
<evidence type="ECO:0000303" key="15">
    <source>
    </source>
</evidence>
<evidence type="ECO:0000305" key="16"/>
<evidence type="ECO:0000312" key="17">
    <source>
        <dbReference type="HGNC" id="HGNC:11010"/>
    </source>
</evidence>
<evidence type="ECO:0007744" key="18">
    <source>
    </source>
</evidence>
<name>GTR5_HUMAN</name>
<reference key="1">
    <citation type="journal article" date="1990" name="J. Biol. Chem.">
        <title>Human facilitative glucose transporters. Isolation, functional characterization, and gene localization of cDNAs encoding an isoform (GLUT5) expressed in small intestine, kidney, muscle, and adipose tissue and an unusual glucose transporter pseudogene-like sequence (GLUT6).</title>
        <authorList>
            <person name="Kayano T."/>
            <person name="Burant C.F."/>
            <person name="Fukumoto H."/>
            <person name="Gould G.W."/>
            <person name="Fan Y.-S."/>
            <person name="Eddy R.L."/>
            <person name="Byers M.G."/>
            <person name="Shows T.B."/>
            <person name="Seino S."/>
            <person name="Bell G.I."/>
        </authorList>
    </citation>
    <scope>NUCLEOTIDE SEQUENCE [MRNA] (ISOFORM 1)</scope>
    <scope>FUNCTION</scope>
    <scope>SUBCELLULAR LOCATION</scope>
    <scope>TISSUE SPECIFICITY</scope>
    <scope>ACTIVITY REGULATION</scope>
    <source>
        <tissue>Jejunum</tissue>
    </source>
</reference>
<reference key="2">
    <citation type="journal article" date="1994" name="Biochem. J.">
        <title>Regulation of expression of the human fructose transporter (GLUT5) by cyclic AMP.</title>
        <authorList>
            <person name="Mahraoui L."/>
            <person name="Takeda J."/>
            <person name="Mesonero J."/>
            <person name="Chantret I."/>
            <person name="Dussaulx E."/>
            <person name="Bell G.I."/>
            <person name="Brot-Laroche E."/>
        </authorList>
    </citation>
    <scope>NUCLEOTIDE SEQUENCE [GENOMIC DNA]</scope>
    <scope>INDUCTION</scope>
    <source>
        <tissue>Fetal liver</tissue>
    </source>
</reference>
<reference key="3">
    <citation type="journal article" date="2004" name="Nat. Genet.">
        <title>Complete sequencing and characterization of 21,243 full-length human cDNAs.</title>
        <authorList>
            <person name="Ota T."/>
            <person name="Suzuki Y."/>
            <person name="Nishikawa T."/>
            <person name="Otsuki T."/>
            <person name="Sugiyama T."/>
            <person name="Irie R."/>
            <person name="Wakamatsu A."/>
            <person name="Hayashi K."/>
            <person name="Sato H."/>
            <person name="Nagai K."/>
            <person name="Kimura K."/>
            <person name="Makita H."/>
            <person name="Sekine M."/>
            <person name="Obayashi M."/>
            <person name="Nishi T."/>
            <person name="Shibahara T."/>
            <person name="Tanaka T."/>
            <person name="Ishii S."/>
            <person name="Yamamoto J."/>
            <person name="Saito K."/>
            <person name="Kawai Y."/>
            <person name="Isono Y."/>
            <person name="Nakamura Y."/>
            <person name="Nagahari K."/>
            <person name="Murakami K."/>
            <person name="Yasuda T."/>
            <person name="Iwayanagi T."/>
            <person name="Wagatsuma M."/>
            <person name="Shiratori A."/>
            <person name="Sudo H."/>
            <person name="Hosoiri T."/>
            <person name="Kaku Y."/>
            <person name="Kodaira H."/>
            <person name="Kondo H."/>
            <person name="Sugawara M."/>
            <person name="Takahashi M."/>
            <person name="Kanda K."/>
            <person name="Yokoi T."/>
            <person name="Furuya T."/>
            <person name="Kikkawa E."/>
            <person name="Omura Y."/>
            <person name="Abe K."/>
            <person name="Kamihara K."/>
            <person name="Katsuta N."/>
            <person name="Sato K."/>
            <person name="Tanikawa M."/>
            <person name="Yamazaki M."/>
            <person name="Ninomiya K."/>
            <person name="Ishibashi T."/>
            <person name="Yamashita H."/>
            <person name="Murakawa K."/>
            <person name="Fujimori K."/>
            <person name="Tanai H."/>
            <person name="Kimata M."/>
            <person name="Watanabe M."/>
            <person name="Hiraoka S."/>
            <person name="Chiba Y."/>
            <person name="Ishida S."/>
            <person name="Ono Y."/>
            <person name="Takiguchi S."/>
            <person name="Watanabe S."/>
            <person name="Yosida M."/>
            <person name="Hotuta T."/>
            <person name="Kusano J."/>
            <person name="Kanehori K."/>
            <person name="Takahashi-Fujii A."/>
            <person name="Hara H."/>
            <person name="Tanase T.-O."/>
            <person name="Nomura Y."/>
            <person name="Togiya S."/>
            <person name="Komai F."/>
            <person name="Hara R."/>
            <person name="Takeuchi K."/>
            <person name="Arita M."/>
            <person name="Imose N."/>
            <person name="Musashino K."/>
            <person name="Yuuki H."/>
            <person name="Oshima A."/>
            <person name="Sasaki N."/>
            <person name="Aotsuka S."/>
            <person name="Yoshikawa Y."/>
            <person name="Matsunawa H."/>
            <person name="Ichihara T."/>
            <person name="Shiohata N."/>
            <person name="Sano S."/>
            <person name="Moriya S."/>
            <person name="Momiyama H."/>
            <person name="Satoh N."/>
            <person name="Takami S."/>
            <person name="Terashima Y."/>
            <person name="Suzuki O."/>
            <person name="Nakagawa S."/>
            <person name="Senoh A."/>
            <person name="Mizoguchi H."/>
            <person name="Goto Y."/>
            <person name="Shimizu F."/>
            <person name="Wakebe H."/>
            <person name="Hishigaki H."/>
            <person name="Watanabe T."/>
            <person name="Sugiyama A."/>
            <person name="Takemoto M."/>
            <person name="Kawakami B."/>
            <person name="Yamazaki M."/>
            <person name="Watanabe K."/>
            <person name="Kumagai A."/>
            <person name="Itakura S."/>
            <person name="Fukuzumi Y."/>
            <person name="Fujimori Y."/>
            <person name="Komiyama M."/>
            <person name="Tashiro H."/>
            <person name="Tanigami A."/>
            <person name="Fujiwara T."/>
            <person name="Ono T."/>
            <person name="Yamada K."/>
            <person name="Fujii Y."/>
            <person name="Ozaki K."/>
            <person name="Hirao M."/>
            <person name="Ohmori Y."/>
            <person name="Kawabata A."/>
            <person name="Hikiji T."/>
            <person name="Kobatake N."/>
            <person name="Inagaki H."/>
            <person name="Ikema Y."/>
            <person name="Okamoto S."/>
            <person name="Okitani R."/>
            <person name="Kawakami T."/>
            <person name="Noguchi S."/>
            <person name="Itoh T."/>
            <person name="Shigeta K."/>
            <person name="Senba T."/>
            <person name="Matsumura K."/>
            <person name="Nakajima Y."/>
            <person name="Mizuno T."/>
            <person name="Morinaga M."/>
            <person name="Sasaki M."/>
            <person name="Togashi T."/>
            <person name="Oyama M."/>
            <person name="Hata H."/>
            <person name="Watanabe M."/>
            <person name="Komatsu T."/>
            <person name="Mizushima-Sugano J."/>
            <person name="Satoh T."/>
            <person name="Shirai Y."/>
            <person name="Takahashi Y."/>
            <person name="Nakagawa K."/>
            <person name="Okumura K."/>
            <person name="Nagase T."/>
            <person name="Nomura N."/>
            <person name="Kikuchi H."/>
            <person name="Masuho Y."/>
            <person name="Yamashita R."/>
            <person name="Nakai K."/>
            <person name="Yada T."/>
            <person name="Nakamura Y."/>
            <person name="Ohara O."/>
            <person name="Isogai T."/>
            <person name="Sugano S."/>
        </authorList>
    </citation>
    <scope>NUCLEOTIDE SEQUENCE [LARGE SCALE MRNA] (ISOFORMS 1 AND 2)</scope>
    <source>
        <tissue>Brain</tissue>
        <tissue>Umbilical cord blood</tissue>
    </source>
</reference>
<reference key="4">
    <citation type="journal article" date="2006" name="Nature">
        <title>The DNA sequence and biological annotation of human chromosome 1.</title>
        <authorList>
            <person name="Gregory S.G."/>
            <person name="Barlow K.F."/>
            <person name="McLay K.E."/>
            <person name="Kaul R."/>
            <person name="Swarbreck D."/>
            <person name="Dunham A."/>
            <person name="Scott C.E."/>
            <person name="Howe K.L."/>
            <person name="Woodfine K."/>
            <person name="Spencer C.C.A."/>
            <person name="Jones M.C."/>
            <person name="Gillson C."/>
            <person name="Searle S."/>
            <person name="Zhou Y."/>
            <person name="Kokocinski F."/>
            <person name="McDonald L."/>
            <person name="Evans R."/>
            <person name="Phillips K."/>
            <person name="Atkinson A."/>
            <person name="Cooper R."/>
            <person name="Jones C."/>
            <person name="Hall R.E."/>
            <person name="Andrews T.D."/>
            <person name="Lloyd C."/>
            <person name="Ainscough R."/>
            <person name="Almeida J.P."/>
            <person name="Ambrose K.D."/>
            <person name="Anderson F."/>
            <person name="Andrew R.W."/>
            <person name="Ashwell R.I.S."/>
            <person name="Aubin K."/>
            <person name="Babbage A.K."/>
            <person name="Bagguley C.L."/>
            <person name="Bailey J."/>
            <person name="Beasley H."/>
            <person name="Bethel G."/>
            <person name="Bird C.P."/>
            <person name="Bray-Allen S."/>
            <person name="Brown J.Y."/>
            <person name="Brown A.J."/>
            <person name="Buckley D."/>
            <person name="Burton J."/>
            <person name="Bye J."/>
            <person name="Carder C."/>
            <person name="Chapman J.C."/>
            <person name="Clark S.Y."/>
            <person name="Clarke G."/>
            <person name="Clee C."/>
            <person name="Cobley V."/>
            <person name="Collier R.E."/>
            <person name="Corby N."/>
            <person name="Coville G.J."/>
            <person name="Davies J."/>
            <person name="Deadman R."/>
            <person name="Dunn M."/>
            <person name="Earthrowl M."/>
            <person name="Ellington A.G."/>
            <person name="Errington H."/>
            <person name="Frankish A."/>
            <person name="Frankland J."/>
            <person name="French L."/>
            <person name="Garner P."/>
            <person name="Garnett J."/>
            <person name="Gay L."/>
            <person name="Ghori M.R.J."/>
            <person name="Gibson R."/>
            <person name="Gilby L.M."/>
            <person name="Gillett W."/>
            <person name="Glithero R.J."/>
            <person name="Grafham D.V."/>
            <person name="Griffiths C."/>
            <person name="Griffiths-Jones S."/>
            <person name="Grocock R."/>
            <person name="Hammond S."/>
            <person name="Harrison E.S.I."/>
            <person name="Hart E."/>
            <person name="Haugen E."/>
            <person name="Heath P.D."/>
            <person name="Holmes S."/>
            <person name="Holt K."/>
            <person name="Howden P.J."/>
            <person name="Hunt A.R."/>
            <person name="Hunt S.E."/>
            <person name="Hunter G."/>
            <person name="Isherwood J."/>
            <person name="James R."/>
            <person name="Johnson C."/>
            <person name="Johnson D."/>
            <person name="Joy A."/>
            <person name="Kay M."/>
            <person name="Kershaw J.K."/>
            <person name="Kibukawa M."/>
            <person name="Kimberley A.M."/>
            <person name="King A."/>
            <person name="Knights A.J."/>
            <person name="Lad H."/>
            <person name="Laird G."/>
            <person name="Lawlor S."/>
            <person name="Leongamornlert D.A."/>
            <person name="Lloyd D.M."/>
            <person name="Loveland J."/>
            <person name="Lovell J."/>
            <person name="Lush M.J."/>
            <person name="Lyne R."/>
            <person name="Martin S."/>
            <person name="Mashreghi-Mohammadi M."/>
            <person name="Matthews L."/>
            <person name="Matthews N.S.W."/>
            <person name="McLaren S."/>
            <person name="Milne S."/>
            <person name="Mistry S."/>
            <person name="Moore M.J.F."/>
            <person name="Nickerson T."/>
            <person name="O'Dell C.N."/>
            <person name="Oliver K."/>
            <person name="Palmeiri A."/>
            <person name="Palmer S.A."/>
            <person name="Parker A."/>
            <person name="Patel D."/>
            <person name="Pearce A.V."/>
            <person name="Peck A.I."/>
            <person name="Pelan S."/>
            <person name="Phelps K."/>
            <person name="Phillimore B.J."/>
            <person name="Plumb R."/>
            <person name="Rajan J."/>
            <person name="Raymond C."/>
            <person name="Rouse G."/>
            <person name="Saenphimmachak C."/>
            <person name="Sehra H.K."/>
            <person name="Sheridan E."/>
            <person name="Shownkeen R."/>
            <person name="Sims S."/>
            <person name="Skuce C.D."/>
            <person name="Smith M."/>
            <person name="Steward C."/>
            <person name="Subramanian S."/>
            <person name="Sycamore N."/>
            <person name="Tracey A."/>
            <person name="Tromans A."/>
            <person name="Van Helmond Z."/>
            <person name="Wall M."/>
            <person name="Wallis J.M."/>
            <person name="White S."/>
            <person name="Whitehead S.L."/>
            <person name="Wilkinson J.E."/>
            <person name="Willey D.L."/>
            <person name="Williams H."/>
            <person name="Wilming L."/>
            <person name="Wray P.W."/>
            <person name="Wu Z."/>
            <person name="Coulson A."/>
            <person name="Vaudin M."/>
            <person name="Sulston J.E."/>
            <person name="Durbin R.M."/>
            <person name="Hubbard T."/>
            <person name="Wooster R."/>
            <person name="Dunham I."/>
            <person name="Carter N.P."/>
            <person name="McVean G."/>
            <person name="Ross M.T."/>
            <person name="Harrow J."/>
            <person name="Olson M.V."/>
            <person name="Beck S."/>
            <person name="Rogers J."/>
            <person name="Bentley D.R."/>
        </authorList>
    </citation>
    <scope>NUCLEOTIDE SEQUENCE [LARGE SCALE GENOMIC DNA]</scope>
</reference>
<reference key="5">
    <citation type="submission" date="2005-07" db="EMBL/GenBank/DDBJ databases">
        <authorList>
            <person name="Mural R.J."/>
            <person name="Istrail S."/>
            <person name="Sutton G.G."/>
            <person name="Florea L."/>
            <person name="Halpern A.L."/>
            <person name="Mobarry C.M."/>
            <person name="Lippert R."/>
            <person name="Walenz B."/>
            <person name="Shatkay H."/>
            <person name="Dew I."/>
            <person name="Miller J.R."/>
            <person name="Flanigan M.J."/>
            <person name="Edwards N.J."/>
            <person name="Bolanos R."/>
            <person name="Fasulo D."/>
            <person name="Halldorsson B.V."/>
            <person name="Hannenhalli S."/>
            <person name="Turner R."/>
            <person name="Yooseph S."/>
            <person name="Lu F."/>
            <person name="Nusskern D.R."/>
            <person name="Shue B.C."/>
            <person name="Zheng X.H."/>
            <person name="Zhong F."/>
            <person name="Delcher A.L."/>
            <person name="Huson D.H."/>
            <person name="Kravitz S.A."/>
            <person name="Mouchard L."/>
            <person name="Reinert K."/>
            <person name="Remington K.A."/>
            <person name="Clark A.G."/>
            <person name="Waterman M.S."/>
            <person name="Eichler E.E."/>
            <person name="Adams M.D."/>
            <person name="Hunkapiller M.W."/>
            <person name="Myers E.W."/>
            <person name="Venter J.C."/>
        </authorList>
    </citation>
    <scope>NUCLEOTIDE SEQUENCE [LARGE SCALE GENOMIC DNA]</scope>
</reference>
<reference key="6">
    <citation type="journal article" date="2004" name="Genome Res.">
        <title>The status, quality, and expansion of the NIH full-length cDNA project: the Mammalian Gene Collection (MGC).</title>
        <authorList>
            <consortium name="The MGC Project Team"/>
        </authorList>
    </citation>
    <scope>NUCLEOTIDE SEQUENCE [LARGE SCALE MRNA] (ISOFORMS 1 AND 2)</scope>
    <source>
        <tissue>Lymph</tissue>
        <tissue>Prostate</tissue>
    </source>
</reference>
<reference key="7">
    <citation type="journal article" date="1993" name="Am. J. Physiol.">
        <title>Sequence, tissue distribution, and functional characterization of the rat fructose transporter GLUT5.</title>
        <authorList>
            <person name="Rand E.B."/>
            <person name="Depaoli A.M."/>
            <person name="Davidson N.O."/>
            <person name="Bell G.I."/>
            <person name="Burant C.F."/>
        </authorList>
    </citation>
    <scope>FUNCTION</scope>
    <scope>TRANSPORTER ACTIVITY</scope>
    <scope>SUBCELLULAR LOCATION</scope>
</reference>
<reference key="8">
    <citation type="journal article" date="1995" name="Biochem. J.">
        <title>The GLUT5 hexose transporter is also localized to the basolateral membrane of the human jejunum.</title>
        <authorList>
            <person name="Blakemore S.J."/>
            <person name="Aledo J.C."/>
            <person name="James J."/>
            <person name="Campbell F.C."/>
            <person name="Lucocq J.M."/>
            <person name="Hundal H.S."/>
        </authorList>
    </citation>
    <scope>SUBCELLULAR LOCATION</scope>
    <scope>TISSUE SPECIFICITY</scope>
</reference>
<reference key="9">
    <citation type="journal article" date="2002" name="Proteomics">
        <title>Cluster analysis of an extensive human breast cancer cell line protein expression map database.</title>
        <authorList>
            <person name="Harris R.A."/>
            <person name="Yang A."/>
            <person name="Stein R.C."/>
            <person name="Lucy K."/>
            <person name="Brusten L."/>
            <person name="Herath A."/>
            <person name="Parekh R."/>
            <person name="Waterfield M.D."/>
            <person name="O'Hare M.J."/>
            <person name="Neville M.A."/>
            <person name="Page M.J."/>
            <person name="Zvelebil M.J."/>
        </authorList>
    </citation>
    <scope>MASS SPECTROMETRY</scope>
    <source>
        <tissue>Mammary cancer</tissue>
    </source>
</reference>
<reference key="10">
    <citation type="journal article" date="2005" name="J. Biol. Chem.">
        <title>Identification of a hydrophobic residue as a key determinant of fructose transport by the facilitative hexose transporter SLC2A7 (GLUT7).</title>
        <authorList>
            <person name="Manolescu A."/>
            <person name="Salas-Burgos A.M."/>
            <person name="Fischbarg J."/>
            <person name="Cheeseman C.I."/>
        </authorList>
    </citation>
    <scope>FUNCTION</scope>
</reference>
<reference key="11">
    <citation type="journal article" date="2018" name="Biochem. Pharmacol.">
        <title>Differential patterns of inhibition of the sugar transporters GLUT2, GLUT5 and GLUT7 by flavonoids.</title>
        <authorList>
            <person name="Gauer J.S."/>
            <person name="Tumova S."/>
            <person name="Lippiat J.D."/>
            <person name="Kerimi A."/>
            <person name="Williamson G."/>
        </authorList>
    </citation>
    <scope>FUNCTION</scope>
    <scope>TRANSPORTER ACTIVITY</scope>
    <scope>ACTIVITY REGULATION</scope>
</reference>
<reference key="12">
    <citation type="journal article" date="2007" name="Mol. Membr. Biol.">
        <title>A highly conserved hydrophobic motif in the exofacial vestibule of fructose transporting SLC2A proteins acts as a critical determinant of their substrate selectivity.</title>
        <authorList>
            <person name="Manolescu A.R."/>
            <person name="Augustin R."/>
            <person name="Moley K."/>
            <person name="Cheeseman C."/>
        </authorList>
    </citation>
    <scope>BIOPHYSICOCHEMICAL PROPERTIES</scope>
    <scope>CHARACTERIZATION OF VARIANT VAL-296</scope>
</reference>
<reference key="13">
    <citation type="journal article" date="2012" name="Proc. Natl. Acad. Sci. U.S.A.">
        <title>N-terminal acetylome analyses and functional insights of the N-terminal acetyltransferase NatB.</title>
        <authorList>
            <person name="Van Damme P."/>
            <person name="Lasa M."/>
            <person name="Polevoda B."/>
            <person name="Gazquez C."/>
            <person name="Elosegui-Artola A."/>
            <person name="Kim D.S."/>
            <person name="De Juan-Pardo E."/>
            <person name="Demeyer K."/>
            <person name="Hole K."/>
            <person name="Larrea E."/>
            <person name="Timmerman E."/>
            <person name="Prieto J."/>
            <person name="Arnesen T."/>
            <person name="Sherman F."/>
            <person name="Gevaert K."/>
            <person name="Aldabe R."/>
        </authorList>
    </citation>
    <scope>ACETYLATION [LARGE SCALE ANALYSIS] AT MET-1</scope>
    <scope>IDENTIFICATION BY MASS SPECTROMETRY [LARGE SCALE ANALYSIS]</scope>
</reference>
<reference key="14">
    <citation type="journal article" date="2017" name="J. Membr. Biol.">
        <title>Reassessment of GLUT7 and GLUT9 as putative fructose and glucose transporters.</title>
        <authorList>
            <person name="Ebert K."/>
            <person name="Ludwig M."/>
            <person name="Geillinger K.E."/>
            <person name="Schoberth G.C."/>
            <person name="Essenwanger J."/>
            <person name="Stolz J."/>
            <person name="Daniel H."/>
            <person name="Witt H."/>
        </authorList>
    </citation>
    <scope>FUNCTION</scope>
    <scope>TRANSPORTER ACTIVITY</scope>
    <scope>BIOPHYSICOCHEMICAL PROPERTIES</scope>
    <scope>SUBCELLULAR LOCATION</scope>
    <scope>VARIANT VAL-296</scope>
    <scope>CHARACTERIZATION OF VARIANT VAL-296</scope>
</reference>
<dbReference type="EMBL" id="M55531">
    <property type="protein sequence ID" value="AAA52570.1"/>
    <property type="molecule type" value="mRNA"/>
</dbReference>
<dbReference type="EMBL" id="U11843">
    <property type="protein sequence ID" value="AAB60641.1"/>
    <property type="status" value="ALT_SEQ"/>
    <property type="molecule type" value="Genomic_DNA"/>
</dbReference>
<dbReference type="EMBL" id="U05344">
    <property type="protein sequence ID" value="AAB60641.1"/>
    <property type="status" value="JOINED"/>
    <property type="molecule type" value="Genomic_DNA"/>
</dbReference>
<dbReference type="EMBL" id="U11839">
    <property type="protein sequence ID" value="AAB60641.1"/>
    <property type="status" value="JOINED"/>
    <property type="molecule type" value="Genomic_DNA"/>
</dbReference>
<dbReference type="EMBL" id="U11840">
    <property type="protein sequence ID" value="AAB60641.1"/>
    <property type="status" value="JOINED"/>
    <property type="molecule type" value="Genomic_DNA"/>
</dbReference>
<dbReference type="EMBL" id="U11841">
    <property type="protein sequence ID" value="AAB60641.1"/>
    <property type="status" value="JOINED"/>
    <property type="molecule type" value="Genomic_DNA"/>
</dbReference>
<dbReference type="EMBL" id="U11842">
    <property type="protein sequence ID" value="AAB60641.1"/>
    <property type="status" value="JOINED"/>
    <property type="molecule type" value="Genomic_DNA"/>
</dbReference>
<dbReference type="EMBL" id="AK289849">
    <property type="protein sequence ID" value="BAF82538.1"/>
    <property type="molecule type" value="mRNA"/>
</dbReference>
<dbReference type="EMBL" id="AK290398">
    <property type="protein sequence ID" value="BAF83087.1"/>
    <property type="molecule type" value="mRNA"/>
</dbReference>
<dbReference type="EMBL" id="AL158048">
    <property type="status" value="NOT_ANNOTATED_CDS"/>
    <property type="molecule type" value="Genomic_DNA"/>
</dbReference>
<dbReference type="EMBL" id="CH471130">
    <property type="protein sequence ID" value="EAW71610.1"/>
    <property type="molecule type" value="Genomic_DNA"/>
</dbReference>
<dbReference type="EMBL" id="BC001692">
    <property type="protein sequence ID" value="AAH01692.1"/>
    <property type="molecule type" value="mRNA"/>
</dbReference>
<dbReference type="EMBL" id="BC001820">
    <property type="protein sequence ID" value="AAH01820.1"/>
    <property type="molecule type" value="mRNA"/>
</dbReference>
<dbReference type="EMBL" id="BC035878">
    <property type="protein sequence ID" value="AAH35878.1"/>
    <property type="molecule type" value="mRNA"/>
</dbReference>
<dbReference type="CCDS" id="CCDS44054.1">
    <molecule id="P22732-2"/>
</dbReference>
<dbReference type="CCDS" id="CCDS99.1">
    <molecule id="P22732-1"/>
</dbReference>
<dbReference type="PIR" id="A36629">
    <property type="entry name" value="A36629"/>
</dbReference>
<dbReference type="PIR" id="G02864">
    <property type="entry name" value="G02864"/>
</dbReference>
<dbReference type="RefSeq" id="NP_001129057.1">
    <molecule id="P22732-2"/>
    <property type="nucleotide sequence ID" value="NM_001135585.2"/>
</dbReference>
<dbReference type="RefSeq" id="NP_001315548.1">
    <molecule id="P22732-1"/>
    <property type="nucleotide sequence ID" value="NM_001328619.2"/>
</dbReference>
<dbReference type="RefSeq" id="NP_003030.1">
    <molecule id="P22732-1"/>
    <property type="nucleotide sequence ID" value="NM_003039.3"/>
</dbReference>
<dbReference type="RefSeq" id="XP_005263548.1">
    <property type="nucleotide sequence ID" value="XM_005263491.3"/>
</dbReference>
<dbReference type="RefSeq" id="XP_016857622.1">
    <property type="nucleotide sequence ID" value="XM_017002133.1"/>
</dbReference>
<dbReference type="RefSeq" id="XP_016857623.1">
    <property type="nucleotide sequence ID" value="XM_017002134.1"/>
</dbReference>
<dbReference type="RefSeq" id="XP_016857624.1">
    <property type="nucleotide sequence ID" value="XM_017002135.1"/>
</dbReference>
<dbReference type="RefSeq" id="XP_016857625.1">
    <property type="nucleotide sequence ID" value="XM_017002136.1"/>
</dbReference>
<dbReference type="RefSeq" id="XP_016857626.1">
    <property type="nucleotide sequence ID" value="XM_017002137.1"/>
</dbReference>
<dbReference type="RefSeq" id="XP_016857627.1">
    <property type="nucleotide sequence ID" value="XM_017002138.1"/>
</dbReference>
<dbReference type="RefSeq" id="XP_016857629.1">
    <property type="nucleotide sequence ID" value="XM_017002140.1"/>
</dbReference>
<dbReference type="RefSeq" id="XP_016857630.1">
    <property type="nucleotide sequence ID" value="XM_017002141.1"/>
</dbReference>
<dbReference type="RefSeq" id="XP_047284544.1">
    <molecule id="P22732-1"/>
    <property type="nucleotide sequence ID" value="XM_047428588.1"/>
</dbReference>
<dbReference type="RefSeq" id="XP_047284547.1">
    <molecule id="P22732-1"/>
    <property type="nucleotide sequence ID" value="XM_047428591.1"/>
</dbReference>
<dbReference type="RefSeq" id="XP_047284550.1">
    <molecule id="P22732-1"/>
    <property type="nucleotide sequence ID" value="XM_047428594.1"/>
</dbReference>
<dbReference type="RefSeq" id="XP_047284554.1">
    <molecule id="P22732-1"/>
    <property type="nucleotide sequence ID" value="XM_047428598.1"/>
</dbReference>
<dbReference type="RefSeq" id="XP_047284558.1">
    <molecule id="P22732-1"/>
    <property type="nucleotide sequence ID" value="XM_047428602.1"/>
</dbReference>
<dbReference type="RefSeq" id="XP_047284562.1">
    <molecule id="P22732-1"/>
    <property type="nucleotide sequence ID" value="XM_047428606.1"/>
</dbReference>
<dbReference type="RefSeq" id="XP_047284568.1">
    <molecule id="P22732-1"/>
    <property type="nucleotide sequence ID" value="XM_047428612.1"/>
</dbReference>
<dbReference type="RefSeq" id="XP_047284570.1">
    <molecule id="P22732-1"/>
    <property type="nucleotide sequence ID" value="XM_047428614.1"/>
</dbReference>
<dbReference type="RefSeq" id="XP_047284571.1">
    <molecule id="P22732-1"/>
    <property type="nucleotide sequence ID" value="XM_047428615.1"/>
</dbReference>
<dbReference type="RefSeq" id="XP_054194374.1">
    <molecule id="P22732-1"/>
    <property type="nucleotide sequence ID" value="XM_054338399.1"/>
</dbReference>
<dbReference type="RefSeq" id="XP_054194375.1">
    <molecule id="P22732-1"/>
    <property type="nucleotide sequence ID" value="XM_054338400.1"/>
</dbReference>
<dbReference type="RefSeq" id="XP_054194376.1">
    <molecule id="P22732-1"/>
    <property type="nucleotide sequence ID" value="XM_054338401.1"/>
</dbReference>
<dbReference type="RefSeq" id="XP_054194377.1">
    <molecule id="P22732-1"/>
    <property type="nucleotide sequence ID" value="XM_054338402.1"/>
</dbReference>
<dbReference type="RefSeq" id="XP_054194378.1">
    <molecule id="P22732-1"/>
    <property type="nucleotide sequence ID" value="XM_054338403.1"/>
</dbReference>
<dbReference type="RefSeq" id="XP_054194379.1">
    <molecule id="P22732-1"/>
    <property type="nucleotide sequence ID" value="XM_054338404.1"/>
</dbReference>
<dbReference type="RefSeq" id="XP_054194380.1">
    <molecule id="P22732-1"/>
    <property type="nucleotide sequence ID" value="XM_054338405.1"/>
</dbReference>
<dbReference type="SMR" id="P22732"/>
<dbReference type="BioGRID" id="112409">
    <property type="interactions" value="45"/>
</dbReference>
<dbReference type="FunCoup" id="P22732">
    <property type="interactions" value="282"/>
</dbReference>
<dbReference type="IntAct" id="P22732">
    <property type="interactions" value="26"/>
</dbReference>
<dbReference type="STRING" id="9606.ENSP00000366641"/>
<dbReference type="BindingDB" id="P22732"/>
<dbReference type="ChEMBL" id="CHEMBL5875"/>
<dbReference type="DrugBank" id="DB01914">
    <property type="generic name" value="D-glucose"/>
</dbReference>
<dbReference type="DrugBank" id="DB09502">
    <property type="generic name" value="Fludeoxyglucose (18F)"/>
</dbReference>
<dbReference type="DrugBank" id="DB09344">
    <property type="generic name" value="Invert sugar"/>
</dbReference>
<dbReference type="TCDB" id="2.A.1.1.13">
    <property type="family name" value="the major facilitator superfamily (mfs)"/>
</dbReference>
<dbReference type="GlyCosmos" id="P22732">
    <property type="glycosylation" value="1 site, No reported glycans"/>
</dbReference>
<dbReference type="GlyGen" id="P22732">
    <property type="glycosylation" value="2 sites"/>
</dbReference>
<dbReference type="iPTMnet" id="P22732"/>
<dbReference type="PhosphoSitePlus" id="P22732"/>
<dbReference type="BioMuta" id="SLC2A5"/>
<dbReference type="DMDM" id="121764"/>
<dbReference type="jPOST" id="P22732"/>
<dbReference type="MassIVE" id="P22732"/>
<dbReference type="PaxDb" id="9606-ENSP00000366641"/>
<dbReference type="PeptideAtlas" id="P22732"/>
<dbReference type="ProteomicsDB" id="54029">
    <molecule id="P22732-1"/>
</dbReference>
<dbReference type="ProteomicsDB" id="54030">
    <molecule id="P22732-2"/>
</dbReference>
<dbReference type="Antibodypedia" id="1404">
    <property type="antibodies" value="471 antibodies from 33 providers"/>
</dbReference>
<dbReference type="DNASU" id="6518"/>
<dbReference type="Ensembl" id="ENST00000377414.7">
    <molecule id="P22732-2"/>
    <property type="protein sequence ID" value="ENSP00000366631.3"/>
    <property type="gene ID" value="ENSG00000142583.18"/>
</dbReference>
<dbReference type="Ensembl" id="ENST00000377424.9">
    <molecule id="P22732-1"/>
    <property type="protein sequence ID" value="ENSP00000366641.4"/>
    <property type="gene ID" value="ENSG00000142583.18"/>
</dbReference>
<dbReference type="GeneID" id="6518"/>
<dbReference type="KEGG" id="hsa:6518"/>
<dbReference type="MANE-Select" id="ENST00000377424.9">
    <property type="protein sequence ID" value="ENSP00000366641.4"/>
    <property type="RefSeq nucleotide sequence ID" value="NM_003039.3"/>
    <property type="RefSeq protein sequence ID" value="NP_003030.1"/>
</dbReference>
<dbReference type="UCSC" id="uc001apo.4">
    <molecule id="P22732-1"/>
    <property type="organism name" value="human"/>
</dbReference>
<dbReference type="AGR" id="HGNC:11010"/>
<dbReference type="CTD" id="6518"/>
<dbReference type="DisGeNET" id="6518"/>
<dbReference type="GeneCards" id="SLC2A5"/>
<dbReference type="HGNC" id="HGNC:11010">
    <property type="gene designation" value="SLC2A5"/>
</dbReference>
<dbReference type="HPA" id="ENSG00000142583">
    <property type="expression patterns" value="Tissue enhanced (bone marrow, intestine, skeletal muscle, testis)"/>
</dbReference>
<dbReference type="MalaCards" id="SLC2A5"/>
<dbReference type="MIM" id="138230">
    <property type="type" value="gene"/>
</dbReference>
<dbReference type="neXtProt" id="NX_P22732"/>
<dbReference type="OpenTargets" id="ENSG00000142583"/>
<dbReference type="PharmGKB" id="PA35880"/>
<dbReference type="VEuPathDB" id="HostDB:ENSG00000142583"/>
<dbReference type="eggNOG" id="KOG0569">
    <property type="taxonomic scope" value="Eukaryota"/>
</dbReference>
<dbReference type="GeneTree" id="ENSGT00940000156846"/>
<dbReference type="HOGENOM" id="CLU_001265_30_5_1"/>
<dbReference type="InParanoid" id="P22732"/>
<dbReference type="OMA" id="QTTVSWM"/>
<dbReference type="OrthoDB" id="4540492at2759"/>
<dbReference type="PAN-GO" id="P22732">
    <property type="GO annotations" value="4 GO annotations based on evolutionary models"/>
</dbReference>
<dbReference type="PhylomeDB" id="P22732"/>
<dbReference type="TreeFam" id="TF313762"/>
<dbReference type="BioCyc" id="MetaCyc:ENSG00000142583-MONOMER"/>
<dbReference type="PathwayCommons" id="P22732"/>
<dbReference type="Reactome" id="R-HSA-6798695">
    <property type="pathway name" value="Neutrophil degranulation"/>
</dbReference>
<dbReference type="Reactome" id="R-HSA-8981373">
    <property type="pathway name" value="Intestinal hexose absorption"/>
</dbReference>
<dbReference type="SignaLink" id="P22732"/>
<dbReference type="SIGNOR" id="P22732"/>
<dbReference type="BioGRID-ORCS" id="6518">
    <property type="hits" value="11 hits in 1142 CRISPR screens"/>
</dbReference>
<dbReference type="ChiTaRS" id="SLC2A5">
    <property type="organism name" value="human"/>
</dbReference>
<dbReference type="GenomeRNAi" id="6518"/>
<dbReference type="Pharos" id="P22732">
    <property type="development level" value="Tbio"/>
</dbReference>
<dbReference type="PRO" id="PR:P22732"/>
<dbReference type="Proteomes" id="UP000005640">
    <property type="component" value="Chromosome 1"/>
</dbReference>
<dbReference type="RNAct" id="P22732">
    <property type="molecule type" value="protein"/>
</dbReference>
<dbReference type="Bgee" id="ENSG00000142583">
    <property type="expression patterns" value="Expressed in jejunal mucosa and 154 other cell types or tissues"/>
</dbReference>
<dbReference type="ExpressionAtlas" id="P22732">
    <property type="expression patterns" value="baseline and differential"/>
</dbReference>
<dbReference type="GO" id="GO:0016324">
    <property type="term" value="C:apical plasma membrane"/>
    <property type="evidence" value="ECO:0000250"/>
    <property type="project" value="UniProtKB"/>
</dbReference>
<dbReference type="GO" id="GO:0070062">
    <property type="term" value="C:extracellular exosome"/>
    <property type="evidence" value="ECO:0007005"/>
    <property type="project" value="UniProtKB"/>
</dbReference>
<dbReference type="GO" id="GO:0005886">
    <property type="term" value="C:plasma membrane"/>
    <property type="evidence" value="ECO:0000314"/>
    <property type="project" value="HPA"/>
</dbReference>
<dbReference type="GO" id="GO:0042383">
    <property type="term" value="C:sarcolemma"/>
    <property type="evidence" value="ECO:0000250"/>
    <property type="project" value="UniProtKB"/>
</dbReference>
<dbReference type="GO" id="GO:0035579">
    <property type="term" value="C:specific granule membrane"/>
    <property type="evidence" value="ECO:0000304"/>
    <property type="project" value="Reactome"/>
</dbReference>
<dbReference type="GO" id="GO:0055056">
    <property type="term" value="F:D-glucose transmembrane transporter activity"/>
    <property type="evidence" value="ECO:0000318"/>
    <property type="project" value="GO_Central"/>
</dbReference>
<dbReference type="GO" id="GO:0070061">
    <property type="term" value="F:fructose binding"/>
    <property type="evidence" value="ECO:0000250"/>
    <property type="project" value="UniProtKB"/>
</dbReference>
<dbReference type="GO" id="GO:0005353">
    <property type="term" value="F:fructose transmembrane transporter activity"/>
    <property type="evidence" value="ECO:0000314"/>
    <property type="project" value="UniProtKB"/>
</dbReference>
<dbReference type="GO" id="GO:0005975">
    <property type="term" value="P:carbohydrate metabolic process"/>
    <property type="evidence" value="ECO:0000304"/>
    <property type="project" value="ProtInc"/>
</dbReference>
<dbReference type="GO" id="GO:0071332">
    <property type="term" value="P:cellular response to fructose stimulus"/>
    <property type="evidence" value="ECO:0000250"/>
    <property type="project" value="UniProtKB"/>
</dbReference>
<dbReference type="GO" id="GO:0046323">
    <property type="term" value="P:D-glucose import"/>
    <property type="evidence" value="ECO:0000318"/>
    <property type="project" value="GO_Central"/>
</dbReference>
<dbReference type="GO" id="GO:1904659">
    <property type="term" value="P:D-glucose transmembrane transport"/>
    <property type="evidence" value="ECO:0000304"/>
    <property type="project" value="ProtInc"/>
</dbReference>
<dbReference type="GO" id="GO:0070837">
    <property type="term" value="P:dehydroascorbic acid transport"/>
    <property type="evidence" value="ECO:0000318"/>
    <property type="project" value="GO_Central"/>
</dbReference>
<dbReference type="GO" id="GO:1990539">
    <property type="term" value="P:fructose import across plasma membrane"/>
    <property type="evidence" value="ECO:0000314"/>
    <property type="project" value="UniProtKB"/>
</dbReference>
<dbReference type="GO" id="GO:0015755">
    <property type="term" value="P:fructose transmembrane transport"/>
    <property type="evidence" value="ECO:0000314"/>
    <property type="project" value="UniProtKB"/>
</dbReference>
<dbReference type="GO" id="GO:0106001">
    <property type="term" value="P:intestinal hexose absorption"/>
    <property type="evidence" value="ECO:0000304"/>
    <property type="project" value="Reactome"/>
</dbReference>
<dbReference type="GO" id="GO:0003044">
    <property type="term" value="P:regulation of systemic arterial blood pressure mediated by a chemical signal"/>
    <property type="evidence" value="ECO:0000250"/>
    <property type="project" value="UniProtKB"/>
</dbReference>
<dbReference type="GO" id="GO:0009750">
    <property type="term" value="P:response to fructose"/>
    <property type="evidence" value="ECO:0000250"/>
    <property type="project" value="UniProtKB"/>
</dbReference>
<dbReference type="CDD" id="cd17432">
    <property type="entry name" value="MFS_GLUT_Class2"/>
    <property type="match status" value="1"/>
</dbReference>
<dbReference type="FunFam" id="1.20.1250.20:FF:001511">
    <property type="entry name" value="Solute carrier family 2, facilitated glucose transporter member 5"/>
    <property type="match status" value="1"/>
</dbReference>
<dbReference type="Gene3D" id="1.20.1250.20">
    <property type="entry name" value="MFS general substrate transporter like domains"/>
    <property type="match status" value="1"/>
</dbReference>
<dbReference type="InterPro" id="IPR002442">
    <property type="entry name" value="Fru_transpt_5"/>
</dbReference>
<dbReference type="InterPro" id="IPR045263">
    <property type="entry name" value="GLUT"/>
</dbReference>
<dbReference type="InterPro" id="IPR020846">
    <property type="entry name" value="MFS_dom"/>
</dbReference>
<dbReference type="InterPro" id="IPR005828">
    <property type="entry name" value="MFS_sugar_transport-like"/>
</dbReference>
<dbReference type="InterPro" id="IPR036259">
    <property type="entry name" value="MFS_trans_sf"/>
</dbReference>
<dbReference type="InterPro" id="IPR003663">
    <property type="entry name" value="Sugar/inositol_transpt"/>
</dbReference>
<dbReference type="InterPro" id="IPR005829">
    <property type="entry name" value="Sugar_transporter_CS"/>
</dbReference>
<dbReference type="NCBIfam" id="TIGR00879">
    <property type="entry name" value="SP"/>
    <property type="match status" value="1"/>
</dbReference>
<dbReference type="PANTHER" id="PTHR23503">
    <property type="entry name" value="SOLUTE CARRIER FAMILY 2"/>
    <property type="match status" value="1"/>
</dbReference>
<dbReference type="PANTHER" id="PTHR23503:SF32">
    <property type="entry name" value="SOLUTE CARRIER FAMILY 2, FACILITATED GLUCOSE TRANSPORTER MEMBER 5"/>
    <property type="match status" value="1"/>
</dbReference>
<dbReference type="Pfam" id="PF00083">
    <property type="entry name" value="Sugar_tr"/>
    <property type="match status" value="1"/>
</dbReference>
<dbReference type="PRINTS" id="PR01194">
    <property type="entry name" value="GLUCTRSPORT5"/>
</dbReference>
<dbReference type="PRINTS" id="PR00171">
    <property type="entry name" value="SUGRTRNSPORT"/>
</dbReference>
<dbReference type="SUPFAM" id="SSF103473">
    <property type="entry name" value="MFS general substrate transporter"/>
    <property type="match status" value="1"/>
</dbReference>
<dbReference type="PROSITE" id="PS50850">
    <property type="entry name" value="MFS"/>
    <property type="match status" value="1"/>
</dbReference>
<dbReference type="PROSITE" id="PS00216">
    <property type="entry name" value="SUGAR_TRANSPORT_1"/>
    <property type="match status" value="1"/>
</dbReference>
<dbReference type="PROSITE" id="PS00217">
    <property type="entry name" value="SUGAR_TRANSPORT_2"/>
    <property type="match status" value="1"/>
</dbReference>
<sequence>MEQQDQSMKEGRLTLVLALATLIAAFGSSFQYGYNVAAVNSPALLMQQFYNETYYGRTGEFMEDFPLTLLWSVTVSMFPFGGFIGSLLVGPLVNKFGRKGALLFNNIFSIVPAILMGCSRVATSFELIIISRLLVGICAGVSSNVVPMYLGELAPKNLRGALGVVPQLFITVGILVAQIFGLRNLLANVDGWPILLGLTGVPAALQLLLLPFFPESPRYLLIQKKDEAAAKKALQTLRGWDSVDREVAEIRQEDEAEKAAGFISVLKLFRMRSLRWQLLSIIVLMGGQQLSGVNAIYYYADQIYLSAGVPEEHVQYVTAGTGAVNVVMTFCAVFVVELLGRRLLLLLGFSICLIACCVLTAALALQDTVSWMPYISIVCVISYVIGHALGPSPIPALLITEIFLQSSRPSAFMVGGSVHWLSNFTVGLIFPFIQEGLGPYSFIVFAVICLLTTIYIFLIVPETKAKTFIEINQIFTKMNKVSEVYPEKEELKELPPVTSEQ</sequence>
<feature type="chain" id="PRO_0000050369" description="Solute carrier family 2, facilitated glucose transporter member 5">
    <location>
        <begin position="1"/>
        <end position="501"/>
    </location>
</feature>
<feature type="topological domain" description="Cytoplasmic" evidence="1">
    <location>
        <begin position="1"/>
        <end position="18"/>
    </location>
</feature>
<feature type="transmembrane region" description="Helical; Name=1" evidence="1">
    <location>
        <begin position="19"/>
        <end position="39"/>
    </location>
</feature>
<feature type="topological domain" description="Extracellular" evidence="1">
    <location>
        <begin position="40"/>
        <end position="68"/>
    </location>
</feature>
<feature type="transmembrane region" description="Helical; Name=2" evidence="1">
    <location>
        <begin position="69"/>
        <end position="91"/>
    </location>
</feature>
<feature type="topological domain" description="Cytoplasmic" evidence="1">
    <location>
        <begin position="92"/>
        <end position="98"/>
    </location>
</feature>
<feature type="transmembrane region" description="Helical; Name=3" evidence="1">
    <location>
        <begin position="99"/>
        <end position="119"/>
    </location>
</feature>
<feature type="topological domain" description="Extracellular" evidence="1">
    <location>
        <begin position="120"/>
        <end position="126"/>
    </location>
</feature>
<feature type="transmembrane region" description="Helical; Name=4" evidence="1">
    <location>
        <begin position="127"/>
        <end position="149"/>
    </location>
</feature>
<feature type="topological domain" description="Cytoplasmic" evidence="1">
    <location>
        <begin position="150"/>
        <end position="161"/>
    </location>
</feature>
<feature type="transmembrane region" description="Helical; Name=5" evidence="1">
    <location>
        <begin position="162"/>
        <end position="182"/>
    </location>
</feature>
<feature type="topological domain" description="Extracellular" evidence="1">
    <location>
        <begin position="183"/>
        <end position="192"/>
    </location>
</feature>
<feature type="transmembrane region" description="Helical; Name=6" evidence="1">
    <location>
        <begin position="193"/>
        <end position="213"/>
    </location>
</feature>
<feature type="topological domain" description="Cytoplasmic" evidence="1">
    <location>
        <begin position="214"/>
        <end position="277"/>
    </location>
</feature>
<feature type="transmembrane region" description="Helical; Name=7" evidence="1">
    <location>
        <begin position="278"/>
        <end position="298"/>
    </location>
</feature>
<feature type="topological domain" description="Extracellular" evidence="1">
    <location>
        <begin position="299"/>
        <end position="313"/>
    </location>
</feature>
<feature type="transmembrane region" description="Helical; Name=8" evidence="1">
    <location>
        <begin position="314"/>
        <end position="334"/>
    </location>
</feature>
<feature type="topological domain" description="Cytoplasmic" evidence="1">
    <location>
        <begin position="335"/>
        <end position="342"/>
    </location>
</feature>
<feature type="transmembrane region" description="Helical; Name=9" evidence="1">
    <location>
        <begin position="343"/>
        <end position="363"/>
    </location>
</feature>
<feature type="topological domain" description="Extracellular" evidence="1">
    <location>
        <begin position="364"/>
        <end position="371"/>
    </location>
</feature>
<feature type="transmembrane region" description="Helical; Name=10" evidence="1">
    <location>
        <begin position="372"/>
        <end position="394"/>
    </location>
</feature>
<feature type="topological domain" description="Cytoplasmic" evidence="1">
    <location>
        <begin position="395"/>
        <end position="412"/>
    </location>
</feature>
<feature type="transmembrane region" description="Helical; Name=11" evidence="1">
    <location>
        <begin position="413"/>
        <end position="433"/>
    </location>
</feature>
<feature type="topological domain" description="Extracellular" evidence="1">
    <location>
        <begin position="434"/>
        <end position="439"/>
    </location>
</feature>
<feature type="transmembrane region" description="Helical; Name=12" evidence="1">
    <location>
        <begin position="440"/>
        <end position="460"/>
    </location>
</feature>
<feature type="topological domain" description="Cytoplasmic" evidence="1">
    <location>
        <begin position="461"/>
        <end position="501"/>
    </location>
</feature>
<feature type="binding site" evidence="1">
    <location>
        <position position="32"/>
    </location>
    <ligand>
        <name>D-fructose</name>
        <dbReference type="ChEBI" id="CHEBI:37721"/>
    </ligand>
</feature>
<feature type="binding site" evidence="1">
    <location>
        <position position="167"/>
    </location>
    <ligand>
        <name>D-fructose</name>
        <dbReference type="ChEBI" id="CHEBI:37721"/>
    </ligand>
</feature>
<feature type="binding site" evidence="1">
    <location>
        <position position="288"/>
    </location>
    <ligand>
        <name>D-fructose</name>
        <dbReference type="ChEBI" id="CHEBI:37721"/>
    </ligand>
</feature>
<feature type="binding site" evidence="1">
    <location>
        <begin position="296"/>
        <end position="298"/>
    </location>
    <ligand>
        <name>D-fructose</name>
        <dbReference type="ChEBI" id="CHEBI:37721"/>
    </ligand>
</feature>
<feature type="binding site" evidence="1">
    <location>
        <position position="387"/>
    </location>
    <ligand>
        <name>D-fructose</name>
        <dbReference type="ChEBI" id="CHEBI:37721"/>
    </ligand>
</feature>
<feature type="binding site" evidence="1">
    <location>
        <begin position="419"/>
        <end position="420"/>
    </location>
    <ligand>
        <name>D-fructose</name>
        <dbReference type="ChEBI" id="CHEBI:37721"/>
    </ligand>
</feature>
<feature type="modified residue" description="N-acetylmethionine" evidence="18">
    <location>
        <position position="1"/>
    </location>
</feature>
<feature type="glycosylation site" description="N-linked (GlcNAc...) asparagine" evidence="3">
    <location>
        <position position="51"/>
    </location>
</feature>
<feature type="splice variant" id="VSP_042031" description="In isoform 2." evidence="13 14">
    <original>WPILLGLTGVPAALQLLLLPFFPESPRYLLIQKKDEAAAKKALQTLRGWDSVDREVAEIRQEDEAEKAAGFISVLKLFRMRSLRWQLLSIIVLMGGQQLSGVNAIYYYADQIYLSAGVPEEHVQYVTAGTGAVNVVMTFCAVFVVELLGRRLLLLLGFSICLIACCVLTAALALQDTVSWMPYISIVCVISYVIGHALGPSPIPALLITEIFLQSSRPSAFMVGGSVHWLSNFTVGLIFPFIQEGLGPYSFIVFAVICLLTTIYIFLIVPETKAKTFIEINQIFTKMNKVSEVYPEKEELKELPPVTSEQ</original>
    <variation>EFRTSREHPHPFTTTLGPLLVFQSHHHRTGLSADWSLLTGWMSLGGPSCPEPT</variation>
    <location>
        <begin position="192"/>
        <end position="501"/>
    </location>
</feature>
<feature type="sequence variant" id="VAR_081827" description="Does not affect D-fructose or D-glucose transport; dbSNP:rs1451503051." evidence="7 8">
    <original>I</original>
    <variation>V</variation>
    <location>
        <position position="296"/>
    </location>
</feature>
<feature type="sequence conflict" description="In Ref. 2; AAB60641." evidence="16" ref="2">
    <original>P</original>
    <variation>G</variation>
    <location>
        <position position="202"/>
    </location>
</feature>
<gene>
    <name evidence="17" type="primary">SLC2A5</name>
    <name evidence="15" type="synonym">GLUT5</name>
</gene>
<comment type="function">
    <text evidence="2 5 6 7 8 9 12">Functions as a fructose transporter that has only low activity with other monosaccharides (PubMed:16186102, PubMed:17710649, PubMed:28083649, PubMed:29548810, PubMed:8333543). Can mediate the uptake of 2-deoxyglucose, but with low efficiency (PubMed:1695905). Essential for fructose uptake in the small intestine (By similarity). Plays a role in the regulation of salt uptake and blood pressure in response to dietary fructose (By similarity). Required for the development of high blood pressure in response to high dietary fructose intake (By similarity).</text>
</comment>
<comment type="catalytic activity">
    <reaction evidence="7 8 9 12">
        <text>D-fructose(out) = D-fructose(in)</text>
        <dbReference type="Rhea" id="RHEA:60372"/>
        <dbReference type="ChEBI" id="CHEBI:37721"/>
    </reaction>
</comment>
<comment type="activity regulation">
    <text evidence="6 9">The uptake of 2-deoxyglucose is inhibited by cytochalasin B. Fructose transport is inhibited by the flavonoids epigallocatechin gallate and apigenin but not quercetin (PubMed:29548810).</text>
</comment>
<comment type="biophysicochemical properties">
    <kinetics>
        <KM evidence="7">0.63 mM for D-glucose</KM>
        <KM evidence="8">30.1 mM for D-fructose</KM>
    </kinetics>
</comment>
<comment type="interaction">
    <interactant intactId="EBI-2825135">
        <id>P22732</id>
    </interactant>
    <interactant intactId="EBI-11343438">
        <id>Q3SXY8</id>
        <label>ARL13B</label>
    </interactant>
    <organismsDiffer>false</organismsDiffer>
    <experiments>3</experiments>
</comment>
<comment type="interaction">
    <interactant intactId="EBI-2825135">
        <id>P22732</id>
    </interactant>
    <interactant intactId="EBI-3904417">
        <id>Q99437</id>
        <label>ATP6V0B</label>
    </interactant>
    <organismsDiffer>false</organismsDiffer>
    <experiments>3</experiments>
</comment>
<comment type="interaction">
    <interactant intactId="EBI-2825135">
        <id>P22732</id>
    </interactant>
    <interactant intactId="EBI-372265">
        <id>P21964</id>
        <label>COMT</label>
    </interactant>
    <organismsDiffer>false</organismsDiffer>
    <experiments>3</experiments>
</comment>
<comment type="interaction">
    <interactant intactId="EBI-2825135">
        <id>P22732</id>
    </interactant>
    <interactant intactId="EBI-17640610">
        <id>P34910-2</id>
        <label>EVI2B</label>
    </interactant>
    <organismsDiffer>false</organismsDiffer>
    <experiments>3</experiments>
</comment>
<comment type="interaction">
    <interactant intactId="EBI-2825135">
        <id>P22732</id>
    </interactant>
    <interactant intactId="EBI-17443171">
        <id>Q96P31-6</id>
        <label>FCRL3</label>
    </interactant>
    <organismsDiffer>false</organismsDiffer>
    <experiments>3</experiments>
</comment>
<comment type="interaction">
    <interactant intactId="EBI-2825135">
        <id>P22732</id>
    </interactant>
    <interactant intactId="EBI-724754">
        <id>O14880</id>
        <label>MGST3</label>
    </interactant>
    <organismsDiffer>false</organismsDiffer>
    <experiments>3</experiments>
</comment>
<comment type="interaction">
    <interactant intactId="EBI-2825135">
        <id>P22732</id>
    </interactant>
    <interactant intactId="EBI-7825321">
        <id>Q96E29</id>
        <label>MTERF3</label>
    </interactant>
    <organismsDiffer>false</organismsDiffer>
    <experiments>3</experiments>
</comment>
<comment type="interaction">
    <interactant intactId="EBI-2825135">
        <id>P22732</id>
    </interactant>
    <interactant intactId="EBI-2559100">
        <id>O75459</id>
        <label>PAGE1</label>
    </interactant>
    <organismsDiffer>false</organismsDiffer>
    <experiments>3</experiments>
</comment>
<comment type="interaction">
    <interactant intactId="EBI-2825135">
        <id>P22732</id>
    </interactant>
    <interactant intactId="EBI-17247926">
        <id>Q9NY72</id>
        <label>SCN3B</label>
    </interactant>
    <organismsDiffer>false</organismsDiffer>
    <experiments>3</experiments>
</comment>
<comment type="interaction">
    <interactant intactId="EBI-2825135">
        <id>P22732</id>
    </interactant>
    <interactant intactId="EBI-19763514">
        <id>Q8N3G9</id>
        <label>TMEM130</label>
    </interactant>
    <organismsDiffer>false</organismsDiffer>
    <experiments>3</experiments>
</comment>
<comment type="interaction">
    <interactant intactId="EBI-2825135">
        <id>P22732</id>
    </interactant>
    <interactant intactId="EBI-10982110">
        <id>Q96Q45-2</id>
        <label>TMEM237</label>
    </interactant>
    <organismsDiffer>false</organismsDiffer>
    <experiments>3</experiments>
</comment>
<comment type="subcellular location">
    <subcellularLocation>
        <location evidence="2">Apical cell membrane</location>
        <topology evidence="2">Multi-pass membrane protein</topology>
    </subcellularLocation>
    <subcellularLocation>
        <location evidence="6 8 10 12">Cell membrane</location>
        <topology evidence="2">Multi-pass membrane protein</topology>
    </subcellularLocation>
    <subcellularLocation>
        <location evidence="1">Cell membrane</location>
        <location evidence="1">Sarcolemma</location>
    </subcellularLocation>
    <text evidence="2">Localized on the apical membrane of jejunum villi, but also on lateral plasma membranes of the villi. Transport to the cell membrane is dependent on RAB11A.</text>
</comment>
<comment type="alternative products">
    <event type="alternative splicing"/>
    <isoform>
        <id>P22732-1</id>
        <name>1</name>
        <sequence type="displayed"/>
    </isoform>
    <isoform>
        <id>P22732-2</id>
        <name>2</name>
        <sequence type="described" ref="VSP_042031"/>
    </isoform>
</comment>
<comment type="tissue specificity">
    <text evidence="6 10">Detected in skeletal muscle, and in jejunum brush border membrane and basolateral membrane (at protein level) (PubMed:7619085). Expressed in small intestine, and at much lower levels in kidney, skeletal muscle, and adipose tissue.</text>
</comment>
<comment type="induction">
    <text evidence="11">By forskolin in Caco-2 cells.</text>
</comment>
<comment type="mass spectrometry"/>
<comment type="similarity">
    <text evidence="16">Belongs to the major facilitator superfamily. Sugar transporter (TC 2.A.1.1) family. Glucose transporter subfamily.</text>
</comment>
<comment type="sequence caution" evidence="16">
    <conflict type="erroneous gene model prediction">
        <sequence resource="EMBL-CDS" id="AAB60641"/>
    </conflict>
</comment>
<protein>
    <recommendedName>
        <fullName evidence="16">Solute carrier family 2, facilitated glucose transporter member 5</fullName>
    </recommendedName>
    <alternativeName>
        <fullName evidence="16">Fructose transporter</fullName>
    </alternativeName>
    <alternativeName>
        <fullName evidence="15">Glucose transporter type 5, small intestine</fullName>
        <shortName evidence="15">GLUT-5</shortName>
    </alternativeName>
</protein>
<accession>P22732</accession>
<accession>Q14770</accession>
<accession>Q5T977</accession>
<accession>Q8IVB3</accession>
<proteinExistence type="evidence at protein level"/>
<organism>
    <name type="scientific">Homo sapiens</name>
    <name type="common">Human</name>
    <dbReference type="NCBI Taxonomy" id="9606"/>
    <lineage>
        <taxon>Eukaryota</taxon>
        <taxon>Metazoa</taxon>
        <taxon>Chordata</taxon>
        <taxon>Craniata</taxon>
        <taxon>Vertebrata</taxon>
        <taxon>Euteleostomi</taxon>
        <taxon>Mammalia</taxon>
        <taxon>Eutheria</taxon>
        <taxon>Euarchontoglires</taxon>
        <taxon>Primates</taxon>
        <taxon>Haplorrhini</taxon>
        <taxon>Catarrhini</taxon>
        <taxon>Hominidae</taxon>
        <taxon>Homo</taxon>
    </lineage>
</organism>
<keyword id="KW-0007">Acetylation</keyword>
<keyword id="KW-0025">Alternative splicing</keyword>
<keyword id="KW-1003">Cell membrane</keyword>
<keyword id="KW-0325">Glycoprotein</keyword>
<keyword id="KW-0472">Membrane</keyword>
<keyword id="KW-1267">Proteomics identification</keyword>
<keyword id="KW-1185">Reference proteome</keyword>
<keyword id="KW-0762">Sugar transport</keyword>
<keyword id="KW-0812">Transmembrane</keyword>
<keyword id="KW-1133">Transmembrane helix</keyword>
<keyword id="KW-0813">Transport</keyword>